<comment type="function">
    <text evidence="1">Required for maturation of 30S ribosomal subunits.</text>
</comment>
<comment type="subcellular location">
    <subcellularLocation>
        <location evidence="1">Cytoplasm</location>
    </subcellularLocation>
</comment>
<comment type="similarity">
    <text evidence="1">Belongs to the RimP family.</text>
</comment>
<feature type="chain" id="PRO_0000384631" description="Ribosome maturation factor RimP">
    <location>
        <begin position="1"/>
        <end position="154"/>
    </location>
</feature>
<proteinExistence type="inferred from homology"/>
<evidence type="ECO:0000255" key="1">
    <source>
        <dbReference type="HAMAP-Rule" id="MF_01077"/>
    </source>
</evidence>
<sequence length="154" mass="18233">MKNNLINMDEINKLIKPIVEELNYELYYIEYVREQNENYLRIYIDSSKGINLEDCEKVSRKVSDILDEKDPISDSYYLEVSSPGIERVLYTEEHLHKYTNNQIIVKLAKLFEGSREHQGNLISFNDDTVTIEKENESINIPRERIKKIILKGEF</sequence>
<keyword id="KW-0963">Cytoplasm</keyword>
<keyword id="KW-1185">Reference proteome</keyword>
<keyword id="KW-0690">Ribosome biogenesis</keyword>
<reference key="1">
    <citation type="journal article" date="2006" name="Nat. Biotechnol.">
        <title>The genome and transcriptomes of the anti-tumor agent Clostridium novyi-NT.</title>
        <authorList>
            <person name="Bettegowda C."/>
            <person name="Huang X."/>
            <person name="Lin J."/>
            <person name="Cheong I."/>
            <person name="Kohli M."/>
            <person name="Szabo S.A."/>
            <person name="Zhang X."/>
            <person name="Diaz L.A. Jr."/>
            <person name="Velculescu V.E."/>
            <person name="Parmigiani G."/>
            <person name="Kinzler K.W."/>
            <person name="Vogelstein B."/>
            <person name="Zhou S."/>
        </authorList>
    </citation>
    <scope>NUCLEOTIDE SEQUENCE [LARGE SCALE GENOMIC DNA]</scope>
    <source>
        <strain>NT</strain>
    </source>
</reference>
<protein>
    <recommendedName>
        <fullName evidence="1">Ribosome maturation factor RimP</fullName>
    </recommendedName>
</protein>
<name>RIMP_CLONN</name>
<gene>
    <name evidence="1" type="primary">rimP</name>
    <name type="ordered locus">NT01CX_2139</name>
</gene>
<dbReference type="EMBL" id="CP000382">
    <property type="protein sequence ID" value="ABK61360.1"/>
    <property type="molecule type" value="Genomic_DNA"/>
</dbReference>
<dbReference type="RefSeq" id="WP_011722212.1">
    <property type="nucleotide sequence ID" value="NC_008593.1"/>
</dbReference>
<dbReference type="SMR" id="A0Q0R0"/>
<dbReference type="STRING" id="386415.NT01CX_2139"/>
<dbReference type="KEGG" id="cno:NT01CX_2139"/>
<dbReference type="PATRIC" id="fig|386415.7.peg.1244"/>
<dbReference type="eggNOG" id="COG0779">
    <property type="taxonomic scope" value="Bacteria"/>
</dbReference>
<dbReference type="HOGENOM" id="CLU_070525_2_2_9"/>
<dbReference type="Proteomes" id="UP000008220">
    <property type="component" value="Chromosome"/>
</dbReference>
<dbReference type="GO" id="GO:0005829">
    <property type="term" value="C:cytosol"/>
    <property type="evidence" value="ECO:0007669"/>
    <property type="project" value="TreeGrafter"/>
</dbReference>
<dbReference type="GO" id="GO:0000028">
    <property type="term" value="P:ribosomal small subunit assembly"/>
    <property type="evidence" value="ECO:0007669"/>
    <property type="project" value="TreeGrafter"/>
</dbReference>
<dbReference type="GO" id="GO:0006412">
    <property type="term" value="P:translation"/>
    <property type="evidence" value="ECO:0007669"/>
    <property type="project" value="TreeGrafter"/>
</dbReference>
<dbReference type="CDD" id="cd01734">
    <property type="entry name" value="YlxS_C"/>
    <property type="match status" value="1"/>
</dbReference>
<dbReference type="FunFam" id="3.30.300.70:FF:000001">
    <property type="entry name" value="Ribosome maturation factor RimP"/>
    <property type="match status" value="1"/>
</dbReference>
<dbReference type="Gene3D" id="2.30.30.180">
    <property type="entry name" value="Ribosome maturation factor RimP, C-terminal domain"/>
    <property type="match status" value="1"/>
</dbReference>
<dbReference type="Gene3D" id="3.30.300.70">
    <property type="entry name" value="RimP-like superfamily, N-terminal"/>
    <property type="match status" value="1"/>
</dbReference>
<dbReference type="HAMAP" id="MF_01077">
    <property type="entry name" value="RimP"/>
    <property type="match status" value="1"/>
</dbReference>
<dbReference type="InterPro" id="IPR003728">
    <property type="entry name" value="Ribosome_maturation_RimP"/>
</dbReference>
<dbReference type="InterPro" id="IPR028998">
    <property type="entry name" value="RimP_C"/>
</dbReference>
<dbReference type="InterPro" id="IPR036847">
    <property type="entry name" value="RimP_C_sf"/>
</dbReference>
<dbReference type="InterPro" id="IPR028989">
    <property type="entry name" value="RimP_N"/>
</dbReference>
<dbReference type="InterPro" id="IPR035956">
    <property type="entry name" value="RimP_N_sf"/>
</dbReference>
<dbReference type="NCBIfam" id="NF000934">
    <property type="entry name" value="PRK00092.3-1"/>
    <property type="match status" value="1"/>
</dbReference>
<dbReference type="PANTHER" id="PTHR33867">
    <property type="entry name" value="RIBOSOME MATURATION FACTOR RIMP"/>
    <property type="match status" value="1"/>
</dbReference>
<dbReference type="PANTHER" id="PTHR33867:SF1">
    <property type="entry name" value="RIBOSOME MATURATION FACTOR RIMP"/>
    <property type="match status" value="1"/>
</dbReference>
<dbReference type="Pfam" id="PF17384">
    <property type="entry name" value="DUF150_C"/>
    <property type="match status" value="1"/>
</dbReference>
<dbReference type="Pfam" id="PF02576">
    <property type="entry name" value="RimP_N"/>
    <property type="match status" value="1"/>
</dbReference>
<dbReference type="SUPFAM" id="SSF74942">
    <property type="entry name" value="YhbC-like, C-terminal domain"/>
    <property type="match status" value="1"/>
</dbReference>
<dbReference type="SUPFAM" id="SSF75420">
    <property type="entry name" value="YhbC-like, N-terminal domain"/>
    <property type="match status" value="1"/>
</dbReference>
<accession>A0Q0R0</accession>
<organism>
    <name type="scientific">Clostridium novyi (strain NT)</name>
    <dbReference type="NCBI Taxonomy" id="386415"/>
    <lineage>
        <taxon>Bacteria</taxon>
        <taxon>Bacillati</taxon>
        <taxon>Bacillota</taxon>
        <taxon>Clostridia</taxon>
        <taxon>Eubacteriales</taxon>
        <taxon>Clostridiaceae</taxon>
        <taxon>Clostridium</taxon>
    </lineage>
</organism>